<dbReference type="EMBL" id="AB004816">
    <property type="protein sequence ID" value="BAA25784.1"/>
    <property type="molecule type" value="mRNA"/>
</dbReference>
<dbReference type="RefSeq" id="NP_001075455.1">
    <property type="nucleotide sequence ID" value="NM_001081986.1"/>
</dbReference>
<dbReference type="SMR" id="O62646"/>
<dbReference type="FunCoup" id="O62646">
    <property type="interactions" value="5"/>
</dbReference>
<dbReference type="STRING" id="9986.ENSOCUP00000021121"/>
<dbReference type="GlyCosmos" id="O62646">
    <property type="glycosylation" value="1 site, No reported glycans"/>
</dbReference>
<dbReference type="PaxDb" id="9986-ENSOCUP00000021121"/>
<dbReference type="GeneID" id="100008596"/>
<dbReference type="KEGG" id="ocu:100008596"/>
<dbReference type="CTD" id="284612"/>
<dbReference type="eggNOG" id="ENOG502RR69">
    <property type="taxonomic scope" value="Eukaryota"/>
</dbReference>
<dbReference type="InParanoid" id="O62646"/>
<dbReference type="OrthoDB" id="10006326at2759"/>
<dbReference type="Proteomes" id="UP000001811">
    <property type="component" value="Unplaced"/>
</dbReference>
<dbReference type="GO" id="GO:0030672">
    <property type="term" value="C:synaptic vesicle membrane"/>
    <property type="evidence" value="ECO:0007669"/>
    <property type="project" value="TreeGrafter"/>
</dbReference>
<dbReference type="InterPro" id="IPR008253">
    <property type="entry name" value="Marvel"/>
</dbReference>
<dbReference type="InterPro" id="IPR001285">
    <property type="entry name" value="Synaptophysin/porin"/>
</dbReference>
<dbReference type="PANTHER" id="PTHR10306">
    <property type="entry name" value="SYNAPTOPHYSIN"/>
    <property type="match status" value="1"/>
</dbReference>
<dbReference type="PANTHER" id="PTHR10306:SF8">
    <property type="entry name" value="SYNAPTOPHYSIN-LIKE PROTEIN 2"/>
    <property type="match status" value="1"/>
</dbReference>
<dbReference type="Pfam" id="PF01284">
    <property type="entry name" value="MARVEL"/>
    <property type="match status" value="1"/>
</dbReference>
<dbReference type="PRINTS" id="PR00220">
    <property type="entry name" value="SYNAPTOPHYSN"/>
</dbReference>
<dbReference type="PROSITE" id="PS51225">
    <property type="entry name" value="MARVEL"/>
    <property type="match status" value="1"/>
</dbReference>
<organism>
    <name type="scientific">Oryctolagus cuniculus</name>
    <name type="common">Rabbit</name>
    <dbReference type="NCBI Taxonomy" id="9986"/>
    <lineage>
        <taxon>Eukaryota</taxon>
        <taxon>Metazoa</taxon>
        <taxon>Chordata</taxon>
        <taxon>Craniata</taxon>
        <taxon>Vertebrata</taxon>
        <taxon>Euteleostomi</taxon>
        <taxon>Mammalia</taxon>
        <taxon>Eutheria</taxon>
        <taxon>Euarchontoglires</taxon>
        <taxon>Glires</taxon>
        <taxon>Lagomorpha</taxon>
        <taxon>Leporidae</taxon>
        <taxon>Oryctolagus</taxon>
    </lineage>
</organism>
<keyword id="KW-0325">Glycoprotein</keyword>
<keyword id="KW-0472">Membrane</keyword>
<keyword id="KW-1185">Reference proteome</keyword>
<keyword id="KW-0812">Transmembrane</keyword>
<keyword id="KW-1133">Transmembrane helix</keyword>
<sequence length="264" mass="29312">MSSTESPSRAADKSPRQQVDRLLEGLRWRRLEEPLGFIKVLQWLFAIFAFGSCGSYSGETGAMVRCNNEAKDVSSIIVLFGYPFRLHRIEYEMPLCDDDSSSKTMHLMGDFSAPAEFFVTLGIFSFFYTMAALVVYLRFHKLYTENKRFPLVDFCVTVSFTFFWLVAAAAWGKGLTDVKGATRPSSLTAAMSVCHGEEAVCSAGATPSMGLANISVLFGFINFFLWAGNCWFVFKETPWHGQGQDQGQGPSQESAAEQGAVEKQ</sequence>
<protein>
    <recommendedName>
        <fullName>Synaptophysin-like protein 2</fullName>
    </recommendedName>
    <alternativeName>
        <fullName>Mitsugumin-29</fullName>
        <shortName>Mg29</shortName>
    </alternativeName>
</protein>
<accession>O62646</accession>
<proteinExistence type="evidence at transcript level"/>
<evidence type="ECO:0000255" key="1"/>
<evidence type="ECO:0000255" key="2">
    <source>
        <dbReference type="PROSITE-ProRule" id="PRU00581"/>
    </source>
</evidence>
<evidence type="ECO:0000256" key="3">
    <source>
        <dbReference type="SAM" id="MobiDB-lite"/>
    </source>
</evidence>
<evidence type="ECO:0000269" key="4">
    <source>
    </source>
</evidence>
<evidence type="ECO:0000303" key="5">
    <source>
    </source>
</evidence>
<evidence type="ECO:0000305" key="6"/>
<gene>
    <name type="primary">SYPL2</name>
    <name type="synonym">MG29</name>
</gene>
<feature type="chain" id="PRO_0000179168" description="Synaptophysin-like protein 2">
    <location>
        <begin position="1"/>
        <end position="264"/>
    </location>
</feature>
<feature type="topological domain" description="Cytoplasmic" evidence="1">
    <location>
        <begin position="1"/>
        <end position="33"/>
    </location>
</feature>
<feature type="transmembrane region" description="Helical" evidence="1">
    <location>
        <begin position="34"/>
        <end position="54"/>
    </location>
</feature>
<feature type="topological domain" description="Vesicular" evidence="1">
    <location>
        <begin position="55"/>
        <end position="116"/>
    </location>
</feature>
<feature type="transmembrane region" description="Helical" evidence="1">
    <location>
        <begin position="117"/>
        <end position="137"/>
    </location>
</feature>
<feature type="topological domain" description="Cytoplasmic" evidence="1">
    <location>
        <begin position="138"/>
        <end position="150"/>
    </location>
</feature>
<feature type="transmembrane region" description="Helical" evidence="1">
    <location>
        <begin position="151"/>
        <end position="171"/>
    </location>
</feature>
<feature type="topological domain" description="Vesicular" evidence="1">
    <location>
        <begin position="172"/>
        <end position="213"/>
    </location>
</feature>
<feature type="transmembrane region" description="Helical" evidence="1">
    <location>
        <begin position="214"/>
        <end position="234"/>
    </location>
</feature>
<feature type="topological domain" description="Cytoplasmic" evidence="1">
    <location>
        <begin position="235"/>
        <end position="264"/>
    </location>
</feature>
<feature type="domain" description="MARVEL" evidence="2">
    <location>
        <begin position="30"/>
        <end position="238"/>
    </location>
</feature>
<feature type="region of interest" description="Disordered" evidence="3">
    <location>
        <begin position="242"/>
        <end position="264"/>
    </location>
</feature>
<feature type="glycosylation site" description="N-linked (GlcNAc...) asparagine" evidence="1">
    <location>
        <position position="213"/>
    </location>
</feature>
<comment type="function">
    <text evidence="4">Involved in communication between the T-tubular and junctional sarcoplasmic reticulum (SR) membranes.</text>
</comment>
<comment type="subcellular location">
    <subcellularLocation>
        <location evidence="4">Membrane</location>
        <topology evidence="4">Multi-pass membrane protein</topology>
    </subcellularLocation>
    <text>Triad junction, the junctional complex between the transverse tubule and the sarcoplasmic reticulum.</text>
</comment>
<comment type="tissue specificity">
    <text>Skeletal muscle.</text>
</comment>
<comment type="miscellaneous">
    <text evidence="5">Was named 'Mitsugumin' which means 'triad junction' in Japanese as it was identified in the triad junctions in skeletal muscle.</text>
</comment>
<comment type="similarity">
    <text evidence="6">Belongs to the synaptophysin/synaptobrevin family.</text>
</comment>
<reference key="1">
    <citation type="journal article" date="1998" name="Biochem. J.">
        <title>Mitsugumin29, a novel synaptophysin family member from the triad junction in skeletal muscle.</title>
        <authorList>
            <person name="Takeshima H."/>
            <person name="Shimuta M."/>
            <person name="Komazaki S."/>
            <person name="Ohmi K."/>
            <person name="Nishi M."/>
            <person name="Iino M."/>
            <person name="Miyata A."/>
            <person name="Kangawa K."/>
        </authorList>
    </citation>
    <scope>NUCLEOTIDE SEQUENCE [MRNA]</scope>
    <scope>FUNCTION</scope>
    <scope>SUBCELLULAR LOCATION</scope>
    <source>
        <tissue>Skeletal muscle</tissue>
    </source>
</reference>
<name>SYPL2_RABIT</name>